<name>RS9_THEKO</name>
<sequence>MRVIQTAGKRKTAVARATIREGKGRVRINHKPVEIIEPEIARFTIMEPLILAGEEIVSRVDIDVKVEGGGFMGQAEAARVAIARALVEWTNDMNLKEKFMKYDRTMLVGDSRRTEPHKPNRSTKGPRAKRQKSYR</sequence>
<feature type="chain" id="PRO_0000111473" description="Small ribosomal subunit protein uS9">
    <location>
        <begin position="1"/>
        <end position="135"/>
    </location>
</feature>
<feature type="region of interest" description="Disordered" evidence="2">
    <location>
        <begin position="108"/>
        <end position="135"/>
    </location>
</feature>
<feature type="compositionally biased region" description="Basic and acidic residues" evidence="2">
    <location>
        <begin position="108"/>
        <end position="118"/>
    </location>
</feature>
<feature type="compositionally biased region" description="Basic residues" evidence="2">
    <location>
        <begin position="119"/>
        <end position="135"/>
    </location>
</feature>
<evidence type="ECO:0000255" key="1">
    <source>
        <dbReference type="HAMAP-Rule" id="MF_00532"/>
    </source>
</evidence>
<evidence type="ECO:0000256" key="2">
    <source>
        <dbReference type="SAM" id="MobiDB-lite"/>
    </source>
</evidence>
<evidence type="ECO:0000269" key="3">
    <source>
    </source>
</evidence>
<evidence type="ECO:0000305" key="4"/>
<evidence type="ECO:0007744" key="5">
    <source>
        <dbReference type="PDB" id="6SKF"/>
    </source>
</evidence>
<evidence type="ECO:0007744" key="6">
    <source>
        <dbReference type="PDB" id="6SKG"/>
    </source>
</evidence>
<evidence type="ECO:0007744" key="7">
    <source>
        <dbReference type="PDB" id="6TH6"/>
    </source>
</evidence>
<proteinExistence type="evidence at protein level"/>
<protein>
    <recommendedName>
        <fullName evidence="1">Small ribosomal subunit protein uS9</fullName>
    </recommendedName>
    <alternativeName>
        <fullName evidence="4">30S ribosomal protein S9</fullName>
    </alternativeName>
</protein>
<reference key="1">
    <citation type="journal article" date="2005" name="Genome Res.">
        <title>Complete genome sequence of the hyperthermophilic archaeon Thermococcus kodakaraensis KOD1 and comparison with Pyrococcus genomes.</title>
        <authorList>
            <person name="Fukui T."/>
            <person name="Atomi H."/>
            <person name="Kanai T."/>
            <person name="Matsumi R."/>
            <person name="Fujiwara S."/>
            <person name="Imanaka T."/>
        </authorList>
    </citation>
    <scope>NUCLEOTIDE SEQUENCE [LARGE SCALE GENOMIC DNA]</scope>
    <source>
        <strain>ATCC BAA-918 / JCM 12380 / KOD1</strain>
    </source>
</reference>
<reference evidence="5 6 7" key="2">
    <citation type="journal article" date="2020" name="Nature">
        <title>Dynamic RNA acetylation revealed by quantitative cross-evolutionary mapping.</title>
        <authorList>
            <person name="Sas-Chen A."/>
            <person name="Thomas J.M."/>
            <person name="Matzov D."/>
            <person name="Taoka M."/>
            <person name="Nance K.D."/>
            <person name="Nir R."/>
            <person name="Bryson K.M."/>
            <person name="Shachar R."/>
            <person name="Liman G.L.S."/>
            <person name="Burkhart B.W."/>
            <person name="Gamage S.T."/>
            <person name="Nobe Y."/>
            <person name="Briney C.A."/>
            <person name="Levy M.J."/>
            <person name="Fuchs R.T."/>
            <person name="Robb G.B."/>
            <person name="Hartmann J."/>
            <person name="Sharma S."/>
            <person name="Lin Q."/>
            <person name="Florens L."/>
            <person name="Washburn M.P."/>
            <person name="Isobe T."/>
            <person name="Santangelo T.J."/>
            <person name="Shalev-Benami M."/>
            <person name="Meier J.L."/>
            <person name="Schwartz S."/>
        </authorList>
    </citation>
    <scope>STRUCTURE BY ELECTRON MICROSCOPY (2.55 ANGSTROMS) IN 70S RIBOSOME</scope>
    <scope>SUBUNIT</scope>
    <source>
        <strain>ATCC BAA-918 / TS559</strain>
    </source>
</reference>
<dbReference type="EMBL" id="AP006878">
    <property type="protein sequence ID" value="BAD85689.1"/>
    <property type="molecule type" value="Genomic_DNA"/>
</dbReference>
<dbReference type="RefSeq" id="WP_011250451.1">
    <property type="nucleotide sequence ID" value="NC_006624.1"/>
</dbReference>
<dbReference type="PDB" id="6SKF">
    <property type="method" value="EM"/>
    <property type="resolution" value="2.95 A"/>
    <property type="chains" value="Al=1-135"/>
</dbReference>
<dbReference type="PDB" id="6SKG">
    <property type="method" value="EM"/>
    <property type="resolution" value="2.65 A"/>
    <property type="chains" value="Al=1-135"/>
</dbReference>
<dbReference type="PDB" id="6TH6">
    <property type="method" value="EM"/>
    <property type="resolution" value="2.55 A"/>
    <property type="chains" value="Al=1-135"/>
</dbReference>
<dbReference type="PDBsum" id="6SKF"/>
<dbReference type="PDBsum" id="6SKG"/>
<dbReference type="PDBsum" id="6TH6"/>
<dbReference type="EMDB" id="EMD-10223"/>
<dbReference type="EMDB" id="EMD-10224"/>
<dbReference type="EMDB" id="EMD-10503"/>
<dbReference type="SMR" id="Q5JJE2"/>
<dbReference type="FunCoup" id="Q5JJE2">
    <property type="interactions" value="106"/>
</dbReference>
<dbReference type="IntAct" id="Q5JJE2">
    <property type="interactions" value="1"/>
</dbReference>
<dbReference type="MINT" id="Q5JJE2"/>
<dbReference type="STRING" id="69014.TK1500"/>
<dbReference type="EnsemblBacteria" id="BAD85689">
    <property type="protein sequence ID" value="BAD85689"/>
    <property type="gene ID" value="TK1500"/>
</dbReference>
<dbReference type="GeneID" id="78448026"/>
<dbReference type="KEGG" id="tko:TK1500"/>
<dbReference type="PATRIC" id="fig|69014.16.peg.1460"/>
<dbReference type="eggNOG" id="arCOG04243">
    <property type="taxonomic scope" value="Archaea"/>
</dbReference>
<dbReference type="HOGENOM" id="CLU_046483_4_0_2"/>
<dbReference type="InParanoid" id="Q5JJE2"/>
<dbReference type="OrthoDB" id="52677at2157"/>
<dbReference type="PhylomeDB" id="Q5JJE2"/>
<dbReference type="Proteomes" id="UP000000536">
    <property type="component" value="Chromosome"/>
</dbReference>
<dbReference type="GO" id="GO:0022627">
    <property type="term" value="C:cytosolic small ribosomal subunit"/>
    <property type="evidence" value="ECO:0000318"/>
    <property type="project" value="GO_Central"/>
</dbReference>
<dbReference type="GO" id="GO:0003723">
    <property type="term" value="F:RNA binding"/>
    <property type="evidence" value="ECO:0000318"/>
    <property type="project" value="GO_Central"/>
</dbReference>
<dbReference type="GO" id="GO:0003735">
    <property type="term" value="F:structural constituent of ribosome"/>
    <property type="evidence" value="ECO:0000318"/>
    <property type="project" value="GO_Central"/>
</dbReference>
<dbReference type="GO" id="GO:0000462">
    <property type="term" value="P:maturation of SSU-rRNA from tricistronic rRNA transcript (SSU-rRNA, 5.8S rRNA, LSU-rRNA)"/>
    <property type="evidence" value="ECO:0000318"/>
    <property type="project" value="GO_Central"/>
</dbReference>
<dbReference type="GO" id="GO:0006412">
    <property type="term" value="P:translation"/>
    <property type="evidence" value="ECO:0007669"/>
    <property type="project" value="UniProtKB-UniRule"/>
</dbReference>
<dbReference type="FunFam" id="3.30.230.10:FF:000051">
    <property type="entry name" value="30S ribosomal protein S9"/>
    <property type="match status" value="1"/>
</dbReference>
<dbReference type="Gene3D" id="3.30.230.10">
    <property type="match status" value="1"/>
</dbReference>
<dbReference type="HAMAP" id="MF_00532_A">
    <property type="entry name" value="Ribosomal_uS9_A"/>
    <property type="match status" value="1"/>
</dbReference>
<dbReference type="InterPro" id="IPR020568">
    <property type="entry name" value="Ribosomal_Su5_D2-typ_SF"/>
</dbReference>
<dbReference type="InterPro" id="IPR000754">
    <property type="entry name" value="Ribosomal_uS9"/>
</dbReference>
<dbReference type="InterPro" id="IPR019958">
    <property type="entry name" value="Ribosomal_uS9_archaeal"/>
</dbReference>
<dbReference type="InterPro" id="IPR020574">
    <property type="entry name" value="Ribosomal_uS9_CS"/>
</dbReference>
<dbReference type="InterPro" id="IPR014721">
    <property type="entry name" value="Ribsml_uS5_D2-typ_fold_subgr"/>
</dbReference>
<dbReference type="NCBIfam" id="NF001749">
    <property type="entry name" value="PRK00474.1"/>
    <property type="match status" value="1"/>
</dbReference>
<dbReference type="NCBIfam" id="TIGR03627">
    <property type="entry name" value="uS9_arch"/>
    <property type="match status" value="1"/>
</dbReference>
<dbReference type="PANTHER" id="PTHR21569:SF16">
    <property type="entry name" value="RIBOSOMAL PROTEIN S16"/>
    <property type="match status" value="1"/>
</dbReference>
<dbReference type="PANTHER" id="PTHR21569">
    <property type="entry name" value="RIBOSOMAL PROTEIN S9"/>
    <property type="match status" value="1"/>
</dbReference>
<dbReference type="Pfam" id="PF00380">
    <property type="entry name" value="Ribosomal_S9"/>
    <property type="match status" value="1"/>
</dbReference>
<dbReference type="SUPFAM" id="SSF54211">
    <property type="entry name" value="Ribosomal protein S5 domain 2-like"/>
    <property type="match status" value="1"/>
</dbReference>
<dbReference type="PROSITE" id="PS00360">
    <property type="entry name" value="RIBOSOMAL_S9"/>
    <property type="match status" value="1"/>
</dbReference>
<organism>
    <name type="scientific">Thermococcus kodakarensis (strain ATCC BAA-918 / JCM 12380 / KOD1)</name>
    <name type="common">Pyrococcus kodakaraensis (strain KOD1)</name>
    <dbReference type="NCBI Taxonomy" id="69014"/>
    <lineage>
        <taxon>Archaea</taxon>
        <taxon>Methanobacteriati</taxon>
        <taxon>Methanobacteriota</taxon>
        <taxon>Thermococci</taxon>
        <taxon>Thermococcales</taxon>
        <taxon>Thermococcaceae</taxon>
        <taxon>Thermococcus</taxon>
    </lineage>
</organism>
<keyword id="KW-0002">3D-structure</keyword>
<keyword id="KW-1185">Reference proteome</keyword>
<keyword id="KW-0687">Ribonucleoprotein</keyword>
<keyword id="KW-0689">Ribosomal protein</keyword>
<gene>
    <name evidence="1" type="primary">rps9</name>
    <name type="ordered locus">TK1500</name>
</gene>
<comment type="subunit">
    <text evidence="3">Part of the 30S ribosomal subunit.</text>
</comment>
<comment type="similarity">
    <text evidence="1">Belongs to the universal ribosomal protein uS9 family.</text>
</comment>
<accession>Q5JJE2</accession>